<dbReference type="EMBL" id="AF293651">
    <property type="protein sequence ID" value="AAG00612.1"/>
    <property type="molecule type" value="mRNA"/>
</dbReference>
<dbReference type="RefSeq" id="NP_001187021.1">
    <property type="nucleotide sequence ID" value="NM_001200092.1"/>
</dbReference>
<dbReference type="SMR" id="Q9DGI3"/>
<dbReference type="STRING" id="7998.ENSIPUP00000010620"/>
<dbReference type="GeneID" id="100304506"/>
<dbReference type="KEGG" id="ipu:100304506"/>
<dbReference type="CTD" id="436734"/>
<dbReference type="OrthoDB" id="2121326at2759"/>
<dbReference type="Proteomes" id="UP000221080">
    <property type="component" value="Chromosome 7"/>
</dbReference>
<dbReference type="GO" id="GO:0005737">
    <property type="term" value="C:cytoplasm"/>
    <property type="evidence" value="ECO:0007669"/>
    <property type="project" value="UniProtKB-SubCell"/>
</dbReference>
<dbReference type="GO" id="GO:0005576">
    <property type="term" value="C:extracellular region"/>
    <property type="evidence" value="ECO:0007669"/>
    <property type="project" value="UniProtKB-SubCell"/>
</dbReference>
<dbReference type="GO" id="GO:0005634">
    <property type="term" value="C:nucleus"/>
    <property type="evidence" value="ECO:0007669"/>
    <property type="project" value="UniProtKB-SubCell"/>
</dbReference>
<dbReference type="GO" id="GO:0015035">
    <property type="term" value="F:protein-disulfide reductase activity"/>
    <property type="evidence" value="ECO:0007669"/>
    <property type="project" value="InterPro"/>
</dbReference>
<dbReference type="GO" id="GO:0042100">
    <property type="term" value="P:B cell proliferation"/>
    <property type="evidence" value="ECO:0000314"/>
    <property type="project" value="AgBase"/>
</dbReference>
<dbReference type="GO" id="GO:0043388">
    <property type="term" value="P:positive regulation of DNA binding"/>
    <property type="evidence" value="ECO:0000250"/>
    <property type="project" value="UniProtKB"/>
</dbReference>
<dbReference type="GO" id="GO:0009314">
    <property type="term" value="P:response to radiation"/>
    <property type="evidence" value="ECO:0000250"/>
    <property type="project" value="UniProtKB"/>
</dbReference>
<dbReference type="CDD" id="cd02947">
    <property type="entry name" value="TRX_family"/>
    <property type="match status" value="1"/>
</dbReference>
<dbReference type="FunFam" id="3.40.30.10:FF:000245">
    <property type="entry name" value="Thioredoxin"/>
    <property type="match status" value="1"/>
</dbReference>
<dbReference type="Gene3D" id="3.40.30.10">
    <property type="entry name" value="Glutaredoxin"/>
    <property type="match status" value="1"/>
</dbReference>
<dbReference type="InterPro" id="IPR005746">
    <property type="entry name" value="Thioredoxin"/>
</dbReference>
<dbReference type="InterPro" id="IPR036249">
    <property type="entry name" value="Thioredoxin-like_sf"/>
</dbReference>
<dbReference type="InterPro" id="IPR017937">
    <property type="entry name" value="Thioredoxin_CS"/>
</dbReference>
<dbReference type="InterPro" id="IPR013766">
    <property type="entry name" value="Thioredoxin_domain"/>
</dbReference>
<dbReference type="PANTHER" id="PTHR46115">
    <property type="entry name" value="THIOREDOXIN-LIKE PROTEIN 1"/>
    <property type="match status" value="1"/>
</dbReference>
<dbReference type="Pfam" id="PF00085">
    <property type="entry name" value="Thioredoxin"/>
    <property type="match status" value="1"/>
</dbReference>
<dbReference type="PIRSF" id="PIRSF000077">
    <property type="entry name" value="Thioredoxin"/>
    <property type="match status" value="1"/>
</dbReference>
<dbReference type="PRINTS" id="PR00421">
    <property type="entry name" value="THIOREDOXIN"/>
</dbReference>
<dbReference type="SUPFAM" id="SSF52833">
    <property type="entry name" value="Thioredoxin-like"/>
    <property type="match status" value="1"/>
</dbReference>
<dbReference type="PROSITE" id="PS00194">
    <property type="entry name" value="THIOREDOXIN_1"/>
    <property type="match status" value="1"/>
</dbReference>
<dbReference type="PROSITE" id="PS51352">
    <property type="entry name" value="THIOREDOXIN_2"/>
    <property type="match status" value="1"/>
</dbReference>
<sequence>MVVHIENLNAFSAALKNAGDKLVVVDFTATWCGPCQKIGPIFETLSKSEDYQNVVFLKVDVDDAADVSSHCDIKCMPTFHFYKNGQKIDEFSGANEQTLKQKINDHK</sequence>
<gene>
    <name type="primary">txn</name>
    <name type="synonym">trx</name>
</gene>
<accession>Q9DGI3</accession>
<reference key="1">
    <citation type="journal article" date="2001" name="J. Immunol.">
        <title>Thioredoxin acts as a B cell growth factor in channel catfish.</title>
        <authorList>
            <person name="Khayat M."/>
            <person name="Stuge T.B."/>
            <person name="Wilson M."/>
            <person name="Bengten E."/>
            <person name="Miller N.W."/>
            <person name="Clem L.W."/>
        </authorList>
    </citation>
    <scope>NUCLEOTIDE SEQUENCE [MRNA]</scope>
</reference>
<proteinExistence type="inferred from homology"/>
<protein>
    <recommendedName>
        <fullName>Thioredoxin</fullName>
        <shortName>Trx</shortName>
    </recommendedName>
</protein>
<evidence type="ECO:0000250" key="1"/>
<evidence type="ECO:0000250" key="2">
    <source>
        <dbReference type="UniProtKB" id="P10599"/>
    </source>
</evidence>
<evidence type="ECO:0000250" key="3">
    <source>
        <dbReference type="UniProtKB" id="Q811S9"/>
    </source>
</evidence>
<evidence type="ECO:0000255" key="4">
    <source>
        <dbReference type="PROSITE-ProRule" id="PRU00691"/>
    </source>
</evidence>
<evidence type="ECO:0000305" key="5"/>
<name>THIO_ICTPU</name>
<organism>
    <name type="scientific">Ictalurus punctatus</name>
    <name type="common">Channel catfish</name>
    <name type="synonym">Silurus punctatus</name>
    <dbReference type="NCBI Taxonomy" id="7998"/>
    <lineage>
        <taxon>Eukaryota</taxon>
        <taxon>Metazoa</taxon>
        <taxon>Chordata</taxon>
        <taxon>Craniata</taxon>
        <taxon>Vertebrata</taxon>
        <taxon>Euteleostomi</taxon>
        <taxon>Actinopterygii</taxon>
        <taxon>Neopterygii</taxon>
        <taxon>Teleostei</taxon>
        <taxon>Ostariophysi</taxon>
        <taxon>Siluriformes</taxon>
        <taxon>Ictaluridae</taxon>
        <taxon>Ictalurus</taxon>
    </lineage>
</organism>
<feature type="chain" id="PRO_0000120015" description="Thioredoxin">
    <location>
        <begin position="1"/>
        <end position="107"/>
    </location>
</feature>
<feature type="domain" description="Thioredoxin" evidence="4">
    <location>
        <begin position="2"/>
        <end position="107"/>
    </location>
</feature>
<feature type="active site" description="Nucleophile" evidence="1">
    <location>
        <position position="32"/>
    </location>
</feature>
<feature type="active site" description="Nucleophile" evidence="1">
    <location>
        <position position="35"/>
    </location>
</feature>
<feature type="site" description="Deprotonates C-terminal active site Cys" evidence="1">
    <location>
        <position position="26"/>
    </location>
</feature>
<feature type="site" description="Contributes to redox potential value" evidence="1">
    <location>
        <position position="33"/>
    </location>
</feature>
<feature type="site" description="Contributes to redox potential value" evidence="1">
    <location>
        <position position="34"/>
    </location>
</feature>
<feature type="modified residue" description="S-nitrosocysteine" evidence="1">
    <location>
        <position position="71"/>
    </location>
</feature>
<feature type="modified residue" description="S-nitrosocysteine" evidence="1">
    <location>
        <position position="75"/>
    </location>
</feature>
<feature type="disulfide bond" description="Redox-active" evidence="4">
    <location>
        <begin position="32"/>
        <end position="35"/>
    </location>
</feature>
<keyword id="KW-0010">Activator</keyword>
<keyword id="KW-0963">Cytoplasm</keyword>
<keyword id="KW-1015">Disulfide bond</keyword>
<keyword id="KW-0249">Electron transport</keyword>
<keyword id="KW-0539">Nucleus</keyword>
<keyword id="KW-0676">Redox-active center</keyword>
<keyword id="KW-0702">S-nitrosylation</keyword>
<keyword id="KW-0964">Secreted</keyword>
<keyword id="KW-0804">Transcription</keyword>
<keyword id="KW-0805">Transcription regulation</keyword>
<keyword id="KW-0813">Transport</keyword>
<comment type="function">
    <text evidence="1">Participates in various redox reactions through the reversible oxidation of its active center dithiol to a disulfide and catalyzes dithiol-disulfide exchange reactions (By similarity). Plays a role in the reversible S-nitrosylation of cysteine residues in target proteins, and thereby contributes to the response to intracellular nitric oxide. Nitrosylates the active site Cys of CASP3 in response to nitric oxide (NO), and thereby inhibits caspase-3 activity. Induces the FOS/JUN AP-1 DNA binding activity in ionizing radiation (IR) cells through its oxidation/reduction status and stimulates AP-1 transcriptional activity (By similarity).</text>
</comment>
<comment type="subcellular location">
    <subcellularLocation>
        <location evidence="2">Nucleus</location>
    </subcellularLocation>
    <subcellularLocation>
        <location evidence="2">Cytoplasm</location>
    </subcellularLocation>
    <subcellularLocation>
        <location evidence="2">Secreted</location>
    </subcellularLocation>
    <text evidence="3">Shuttles between the nucleus and nucleolus.</text>
</comment>
<comment type="PTM">
    <text evidence="1">May be nitrosylated on several cysteine residues, depending on the oxidation state. Nitrosylated Cys-75 may serve as donor for nitrosylation of target proteins (By similarity).</text>
</comment>
<comment type="similarity">
    <text evidence="5">Belongs to the thioredoxin family.</text>
</comment>